<organism>
    <name type="scientific">Acinetobacter baumannii (strain AYE)</name>
    <dbReference type="NCBI Taxonomy" id="509173"/>
    <lineage>
        <taxon>Bacteria</taxon>
        <taxon>Pseudomonadati</taxon>
        <taxon>Pseudomonadota</taxon>
        <taxon>Gammaproteobacteria</taxon>
        <taxon>Moraxellales</taxon>
        <taxon>Moraxellaceae</taxon>
        <taxon>Acinetobacter</taxon>
        <taxon>Acinetobacter calcoaceticus/baumannii complex</taxon>
    </lineage>
</organism>
<accession>B0V9Q9</accession>
<dbReference type="EC" id="2.7.4.3" evidence="1"/>
<dbReference type="EMBL" id="CU459141">
    <property type="protein sequence ID" value="CAM87598.1"/>
    <property type="molecule type" value="Genomic_DNA"/>
</dbReference>
<dbReference type="RefSeq" id="WP_001220244.1">
    <property type="nucleotide sequence ID" value="NZ_JBDGFB010000015.1"/>
</dbReference>
<dbReference type="SMR" id="B0V9Q9"/>
<dbReference type="EnsemblBacteria" id="CAM87598">
    <property type="protein sequence ID" value="CAM87598"/>
    <property type="gene ID" value="ABAYE2767"/>
</dbReference>
<dbReference type="GeneID" id="92892986"/>
<dbReference type="KEGG" id="aby:ABAYE2767"/>
<dbReference type="HOGENOM" id="CLU_032354_1_2_6"/>
<dbReference type="UniPathway" id="UPA00588">
    <property type="reaction ID" value="UER00649"/>
</dbReference>
<dbReference type="GO" id="GO:0005737">
    <property type="term" value="C:cytoplasm"/>
    <property type="evidence" value="ECO:0007669"/>
    <property type="project" value="UniProtKB-SubCell"/>
</dbReference>
<dbReference type="GO" id="GO:0004017">
    <property type="term" value="F:adenylate kinase activity"/>
    <property type="evidence" value="ECO:0007669"/>
    <property type="project" value="UniProtKB-UniRule"/>
</dbReference>
<dbReference type="GO" id="GO:0005524">
    <property type="term" value="F:ATP binding"/>
    <property type="evidence" value="ECO:0007669"/>
    <property type="project" value="UniProtKB-UniRule"/>
</dbReference>
<dbReference type="GO" id="GO:0044209">
    <property type="term" value="P:AMP salvage"/>
    <property type="evidence" value="ECO:0007669"/>
    <property type="project" value="UniProtKB-UniRule"/>
</dbReference>
<dbReference type="CDD" id="cd01428">
    <property type="entry name" value="ADK"/>
    <property type="match status" value="1"/>
</dbReference>
<dbReference type="FunFam" id="3.40.50.300:FF:000106">
    <property type="entry name" value="Adenylate kinase mitochondrial"/>
    <property type="match status" value="1"/>
</dbReference>
<dbReference type="Gene3D" id="3.40.50.300">
    <property type="entry name" value="P-loop containing nucleotide triphosphate hydrolases"/>
    <property type="match status" value="1"/>
</dbReference>
<dbReference type="HAMAP" id="MF_00235">
    <property type="entry name" value="Adenylate_kinase_Adk"/>
    <property type="match status" value="1"/>
</dbReference>
<dbReference type="InterPro" id="IPR006259">
    <property type="entry name" value="Adenyl_kin_sub"/>
</dbReference>
<dbReference type="InterPro" id="IPR000850">
    <property type="entry name" value="Adenylat/UMP-CMP_kin"/>
</dbReference>
<dbReference type="InterPro" id="IPR033690">
    <property type="entry name" value="Adenylat_kinase_CS"/>
</dbReference>
<dbReference type="InterPro" id="IPR007862">
    <property type="entry name" value="Adenylate_kinase_lid-dom"/>
</dbReference>
<dbReference type="InterPro" id="IPR027417">
    <property type="entry name" value="P-loop_NTPase"/>
</dbReference>
<dbReference type="NCBIfam" id="TIGR01351">
    <property type="entry name" value="adk"/>
    <property type="match status" value="1"/>
</dbReference>
<dbReference type="NCBIfam" id="NF001379">
    <property type="entry name" value="PRK00279.1-1"/>
    <property type="match status" value="1"/>
</dbReference>
<dbReference type="NCBIfam" id="NF001380">
    <property type="entry name" value="PRK00279.1-2"/>
    <property type="match status" value="1"/>
</dbReference>
<dbReference type="NCBIfam" id="NF001381">
    <property type="entry name" value="PRK00279.1-3"/>
    <property type="match status" value="1"/>
</dbReference>
<dbReference type="NCBIfam" id="NF011100">
    <property type="entry name" value="PRK14527.1"/>
    <property type="match status" value="1"/>
</dbReference>
<dbReference type="PANTHER" id="PTHR23359">
    <property type="entry name" value="NUCLEOTIDE KINASE"/>
    <property type="match status" value="1"/>
</dbReference>
<dbReference type="Pfam" id="PF00406">
    <property type="entry name" value="ADK"/>
    <property type="match status" value="1"/>
</dbReference>
<dbReference type="Pfam" id="PF05191">
    <property type="entry name" value="ADK_lid"/>
    <property type="match status" value="1"/>
</dbReference>
<dbReference type="PRINTS" id="PR00094">
    <property type="entry name" value="ADENYLTKNASE"/>
</dbReference>
<dbReference type="SUPFAM" id="SSF52540">
    <property type="entry name" value="P-loop containing nucleoside triphosphate hydrolases"/>
    <property type="match status" value="1"/>
</dbReference>
<dbReference type="PROSITE" id="PS00113">
    <property type="entry name" value="ADENYLATE_KINASE"/>
    <property type="match status" value="1"/>
</dbReference>
<feature type="chain" id="PRO_1000100522" description="Adenylate kinase">
    <location>
        <begin position="1"/>
        <end position="217"/>
    </location>
</feature>
<feature type="region of interest" description="NMP" evidence="1">
    <location>
        <begin position="30"/>
        <end position="59"/>
    </location>
</feature>
<feature type="region of interest" description="LID" evidence="1">
    <location>
        <begin position="122"/>
        <end position="159"/>
    </location>
</feature>
<feature type="binding site" evidence="1">
    <location>
        <begin position="10"/>
        <end position="15"/>
    </location>
    <ligand>
        <name>ATP</name>
        <dbReference type="ChEBI" id="CHEBI:30616"/>
    </ligand>
</feature>
<feature type="binding site" evidence="1">
    <location>
        <position position="31"/>
    </location>
    <ligand>
        <name>AMP</name>
        <dbReference type="ChEBI" id="CHEBI:456215"/>
    </ligand>
</feature>
<feature type="binding site" evidence="1">
    <location>
        <position position="36"/>
    </location>
    <ligand>
        <name>AMP</name>
        <dbReference type="ChEBI" id="CHEBI:456215"/>
    </ligand>
</feature>
<feature type="binding site" evidence="1">
    <location>
        <begin position="57"/>
        <end position="59"/>
    </location>
    <ligand>
        <name>AMP</name>
        <dbReference type="ChEBI" id="CHEBI:456215"/>
    </ligand>
</feature>
<feature type="binding site" evidence="1">
    <location>
        <begin position="85"/>
        <end position="88"/>
    </location>
    <ligand>
        <name>AMP</name>
        <dbReference type="ChEBI" id="CHEBI:456215"/>
    </ligand>
</feature>
<feature type="binding site" evidence="1">
    <location>
        <position position="92"/>
    </location>
    <ligand>
        <name>AMP</name>
        <dbReference type="ChEBI" id="CHEBI:456215"/>
    </ligand>
</feature>
<feature type="binding site" evidence="1">
    <location>
        <position position="123"/>
    </location>
    <ligand>
        <name>ATP</name>
        <dbReference type="ChEBI" id="CHEBI:30616"/>
    </ligand>
</feature>
<feature type="binding site" evidence="1">
    <location>
        <begin position="132"/>
        <end position="133"/>
    </location>
    <ligand>
        <name>ATP</name>
        <dbReference type="ChEBI" id="CHEBI:30616"/>
    </ligand>
</feature>
<feature type="binding site" evidence="1">
    <location>
        <position position="156"/>
    </location>
    <ligand>
        <name>AMP</name>
        <dbReference type="ChEBI" id="CHEBI:456215"/>
    </ligand>
</feature>
<feature type="binding site" evidence="1">
    <location>
        <position position="167"/>
    </location>
    <ligand>
        <name>AMP</name>
        <dbReference type="ChEBI" id="CHEBI:456215"/>
    </ligand>
</feature>
<feature type="binding site" evidence="1">
    <location>
        <position position="202"/>
    </location>
    <ligand>
        <name>ATP</name>
        <dbReference type="ChEBI" id="CHEBI:30616"/>
    </ligand>
</feature>
<keyword id="KW-0067">ATP-binding</keyword>
<keyword id="KW-0963">Cytoplasm</keyword>
<keyword id="KW-0418">Kinase</keyword>
<keyword id="KW-0545">Nucleotide biosynthesis</keyword>
<keyword id="KW-0547">Nucleotide-binding</keyword>
<keyword id="KW-0808">Transferase</keyword>
<protein>
    <recommendedName>
        <fullName evidence="1">Adenylate kinase</fullName>
        <shortName evidence="1">AK</shortName>
        <ecNumber evidence="1">2.7.4.3</ecNumber>
    </recommendedName>
    <alternativeName>
        <fullName evidence="1">ATP-AMP transphosphorylase</fullName>
    </alternativeName>
    <alternativeName>
        <fullName evidence="1">ATP:AMP phosphotransferase</fullName>
    </alternativeName>
    <alternativeName>
        <fullName evidence="1">Adenylate monophosphate kinase</fullName>
    </alternativeName>
</protein>
<evidence type="ECO:0000255" key="1">
    <source>
        <dbReference type="HAMAP-Rule" id="MF_00235"/>
    </source>
</evidence>
<comment type="function">
    <text evidence="1">Catalyzes the reversible transfer of the terminal phosphate group between ATP and AMP. Plays an important role in cellular energy homeostasis and in adenine nucleotide metabolism.</text>
</comment>
<comment type="catalytic activity">
    <reaction evidence="1">
        <text>AMP + ATP = 2 ADP</text>
        <dbReference type="Rhea" id="RHEA:12973"/>
        <dbReference type="ChEBI" id="CHEBI:30616"/>
        <dbReference type="ChEBI" id="CHEBI:456215"/>
        <dbReference type="ChEBI" id="CHEBI:456216"/>
        <dbReference type="EC" id="2.7.4.3"/>
    </reaction>
</comment>
<comment type="pathway">
    <text evidence="1">Purine metabolism; AMP biosynthesis via salvage pathway; AMP from ADP: step 1/1.</text>
</comment>
<comment type="subunit">
    <text evidence="1">Monomer.</text>
</comment>
<comment type="subcellular location">
    <subcellularLocation>
        <location evidence="1">Cytoplasm</location>
    </subcellularLocation>
</comment>
<comment type="domain">
    <text evidence="1">Consists of three domains, a large central CORE domain and two small peripheral domains, NMPbind and LID, which undergo movements during catalysis. The LID domain closes over the site of phosphoryl transfer upon ATP binding. Assembling and dissambling the active center during each catalytic cycle provides an effective means to prevent ATP hydrolysis.</text>
</comment>
<comment type="similarity">
    <text evidence="1">Belongs to the adenylate kinase family.</text>
</comment>
<sequence>MRIILLGPPGAGKGTQAQLICKRYNIPQISTGDMLRAAIREGTELGLKAKSVMESGGLVSDELIIGLVKERIAQPDCVNGCIFDGFPRTIPQAEALEKEGISIDHVIEIDVPDEEIVKRLSGRRQHPASGRVYHVVYNPPKVEGKDDETGEDLVQRPDDQEETIRKRLASYHTETEQLVGFYQGRAASGENAPTYDKLDGLRTIEDVQKDLFNILDK</sequence>
<gene>
    <name evidence="1" type="primary">adk</name>
    <name type="ordered locus">ABAYE2767</name>
</gene>
<reference key="1">
    <citation type="journal article" date="2008" name="PLoS ONE">
        <title>Comparative analysis of Acinetobacters: three genomes for three lifestyles.</title>
        <authorList>
            <person name="Vallenet D."/>
            <person name="Nordmann P."/>
            <person name="Barbe V."/>
            <person name="Poirel L."/>
            <person name="Mangenot S."/>
            <person name="Bataille E."/>
            <person name="Dossat C."/>
            <person name="Gas S."/>
            <person name="Kreimeyer A."/>
            <person name="Lenoble P."/>
            <person name="Oztas S."/>
            <person name="Poulain J."/>
            <person name="Segurens B."/>
            <person name="Robert C."/>
            <person name="Abergel C."/>
            <person name="Claverie J.-M."/>
            <person name="Raoult D."/>
            <person name="Medigue C."/>
            <person name="Weissenbach J."/>
            <person name="Cruveiller S."/>
        </authorList>
    </citation>
    <scope>NUCLEOTIDE SEQUENCE [LARGE SCALE GENOMIC DNA]</scope>
    <source>
        <strain>AYE</strain>
    </source>
</reference>
<proteinExistence type="inferred from homology"/>
<name>KAD_ACIBY</name>